<keyword id="KW-0025">Alternative splicing</keyword>
<keyword id="KW-1003">Cell membrane</keyword>
<keyword id="KW-1015">Disulfide bond</keyword>
<keyword id="KW-0297">G-protein coupled receptor</keyword>
<keyword id="KW-0325">Glycoprotein</keyword>
<keyword id="KW-0472">Membrane</keyword>
<keyword id="KW-0675">Receptor</keyword>
<keyword id="KW-1185">Reference proteome</keyword>
<keyword id="KW-0807">Transducer</keyword>
<keyword id="KW-0812">Transmembrane</keyword>
<keyword id="KW-1133">Transmembrane helix</keyword>
<feature type="chain" id="PRO_0000069300" description="Cysteinyl leukotriene receptor 1">
    <location>
        <begin position="1"/>
        <end position="352"/>
    </location>
</feature>
<feature type="topological domain" description="Extracellular" evidence="1">
    <location>
        <begin position="1"/>
        <end position="43"/>
    </location>
</feature>
<feature type="transmembrane region" description="Helical; Name=1" evidence="1">
    <location>
        <begin position="44"/>
        <end position="64"/>
    </location>
</feature>
<feature type="topological domain" description="Cytoplasmic" evidence="1">
    <location>
        <begin position="65"/>
        <end position="72"/>
    </location>
</feature>
<feature type="transmembrane region" description="Helical; Name=2" evidence="1">
    <location>
        <begin position="73"/>
        <end position="93"/>
    </location>
</feature>
<feature type="topological domain" description="Extracellular" evidence="1">
    <location>
        <begin position="94"/>
        <end position="121"/>
    </location>
</feature>
<feature type="transmembrane region" description="Helical; Name=3" evidence="1">
    <location>
        <begin position="122"/>
        <end position="142"/>
    </location>
</feature>
<feature type="topological domain" description="Cytoplasmic" evidence="1">
    <location>
        <begin position="143"/>
        <end position="156"/>
    </location>
</feature>
<feature type="transmembrane region" description="Helical; Name=4" evidence="1">
    <location>
        <begin position="157"/>
        <end position="177"/>
    </location>
</feature>
<feature type="topological domain" description="Extracellular" evidence="1">
    <location>
        <begin position="178"/>
        <end position="208"/>
    </location>
</feature>
<feature type="transmembrane region" description="Helical; Name=5" evidence="1">
    <location>
        <begin position="209"/>
        <end position="229"/>
    </location>
</feature>
<feature type="topological domain" description="Cytoplasmic" evidence="1">
    <location>
        <begin position="230"/>
        <end position="245"/>
    </location>
</feature>
<feature type="transmembrane region" description="Helical; Name=6" evidence="1">
    <location>
        <begin position="246"/>
        <end position="266"/>
    </location>
</feature>
<feature type="topological domain" description="Extracellular" evidence="1">
    <location>
        <begin position="267"/>
        <end position="291"/>
    </location>
</feature>
<feature type="transmembrane region" description="Helical; Name=7" evidence="1">
    <location>
        <begin position="292"/>
        <end position="312"/>
    </location>
</feature>
<feature type="topological domain" description="Cytoplasmic" evidence="1">
    <location>
        <begin position="313"/>
        <end position="352"/>
    </location>
</feature>
<feature type="glycosylation site" description="N-linked (GlcNAc...) asparagine" evidence="1">
    <location>
        <position position="15"/>
    </location>
</feature>
<feature type="glycosylation site" description="N-linked (GlcNAc...) asparagine" evidence="1">
    <location>
        <position position="19"/>
    </location>
</feature>
<feature type="glycosylation site" description="N-linked (GlcNAc...) asparagine" evidence="1">
    <location>
        <position position="26"/>
    </location>
</feature>
<feature type="glycosylation site" description="N-linked (GlcNAc...) asparagine" evidence="1">
    <location>
        <position position="184"/>
    </location>
</feature>
<feature type="disulfide bond" evidence="2">
    <location>
        <begin position="111"/>
        <end position="188"/>
    </location>
</feature>
<feature type="splice variant" id="VSP_001921" description="In isoform 2." evidence="3">
    <location>
        <begin position="1"/>
        <end position="13"/>
    </location>
</feature>
<feature type="sequence conflict" description="In Ref. 3; AAF73047." evidence="4" ref="3">
    <original>Y</original>
    <variation>D</variation>
    <location>
        <position position="176"/>
    </location>
</feature>
<organism>
    <name type="scientific">Mus musculus</name>
    <name type="common">Mouse</name>
    <dbReference type="NCBI Taxonomy" id="10090"/>
    <lineage>
        <taxon>Eukaryota</taxon>
        <taxon>Metazoa</taxon>
        <taxon>Chordata</taxon>
        <taxon>Craniata</taxon>
        <taxon>Vertebrata</taxon>
        <taxon>Euteleostomi</taxon>
        <taxon>Mammalia</taxon>
        <taxon>Eutheria</taxon>
        <taxon>Euarchontoglires</taxon>
        <taxon>Glires</taxon>
        <taxon>Rodentia</taxon>
        <taxon>Myomorpha</taxon>
        <taxon>Muroidea</taxon>
        <taxon>Muridae</taxon>
        <taxon>Murinae</taxon>
        <taxon>Mus</taxon>
        <taxon>Mus</taxon>
    </lineage>
</organism>
<name>CLTR1_MOUSE</name>
<comment type="function">
    <text>Receptor for cysteinyl leukotrienes mediating constriction of the microvascular smooth muscle during an inflammatory response. This response is mediated via a G-protein that activates a phosphatidylinositol-calcium second messenger system. The rank order of affinities for the leukotrienes is LTD4 &gt;&gt; LTE4 = LTC4 &gt;&gt; LTB4.</text>
</comment>
<comment type="interaction">
    <interactant intactId="EBI-15791392">
        <id>Q99JA4</id>
    </interactant>
    <interactant intactId="EBI-15791369">
        <id>Q6NS65</id>
        <label>Gpr17</label>
    </interactant>
    <organismsDiffer>false</organismsDiffer>
    <experiments>2</experiments>
</comment>
<comment type="subcellular location">
    <subcellularLocation>
        <location>Cell membrane</location>
        <topology>Multi-pass membrane protein</topology>
    </subcellularLocation>
</comment>
<comment type="alternative products">
    <event type="alternative splicing"/>
    <isoform>
        <id>Q99JA4-1</id>
        <name>1</name>
        <name>Long</name>
        <sequence type="displayed"/>
    </isoform>
    <isoform>
        <id>Q99JA4-2</id>
        <name>2</name>
        <name>Short</name>
        <sequence type="described" ref="VSP_001921"/>
    </isoform>
</comment>
<comment type="tissue specificity">
    <text>Widely expressed, with higher expression in the lung and skin, intermediate levels in the heart, kidney and stomach and lower levels in several other tissues. Isoform 1 is the most abundant form in all tested tissues.</text>
</comment>
<comment type="miscellaneous">
    <text>MK-571, a selective antagonist, was shown to inhibit eosinophilia, bronchial hyperreactivity and microvascular leakage. Zafirlukast (Accolate) and pranlukast (Onon) were also shown to be selective antagonists.</text>
</comment>
<comment type="similarity">
    <text evidence="2">Belongs to the G-protein coupled receptor 1 family.</text>
</comment>
<sequence length="352" mass="40715">MYLQGTKQTFLENMNGTENLTTSLINNTCHDTIDEFRNQVYSTMYSVISVVGFFGNSFVLYVLIKTYHEKSAFQVYMINLAIADLLCVCTLPLRVVYYVHKGKWLFGDFLCRLTTYALYVNLYCSIFFMTAMSFFRCVAIVFPVQNINLVTQKKARFVCIGIWIFVILTSSPFLMYKSYQDEKNNTKCFEPPQNNQAKKYVLILHYVSLFFGFIIPFVTIIVCYTMIILTLLKNTMKKNMPSRRKAIGMIIVVTAAFLVSFMPYHIQRTIHLHLLHSETRPCDSVLRMQKSVVITLSLAASNCCFDPLLYFFSGGNFRRRLSTFRKHSLSSMTYVPKKKASLPEKGEEICNE</sequence>
<gene>
    <name type="primary">Cysltr1</name>
    <name type="synonym">Cyslt1</name>
    <name type="synonym">Cyslt1r</name>
</gene>
<proteinExistence type="evidence at protein level"/>
<dbReference type="EMBL" id="AF329272">
    <property type="protein sequence ID" value="AAK16715.1"/>
    <property type="molecule type" value="Genomic_DNA"/>
</dbReference>
<dbReference type="EMBL" id="AF329272">
    <property type="protein sequence ID" value="AAK16716.1"/>
    <property type="molecule type" value="Genomic_DNA"/>
</dbReference>
<dbReference type="EMBL" id="AF205830">
    <property type="protein sequence ID" value="AAK15433.1"/>
    <property type="molecule type" value="mRNA"/>
</dbReference>
<dbReference type="EMBL" id="AF263370">
    <property type="protein sequence ID" value="AAF73047.1"/>
    <property type="molecule type" value="mRNA"/>
</dbReference>
<dbReference type="EMBL" id="AB044087">
    <property type="protein sequence ID" value="BAA96809.1"/>
    <property type="molecule type" value="mRNA"/>
</dbReference>
<dbReference type="EMBL" id="AK033476">
    <property type="protein sequence ID" value="BAC28308.1"/>
    <property type="molecule type" value="mRNA"/>
</dbReference>
<dbReference type="EMBL" id="AL732460">
    <property type="status" value="NOT_ANNOTATED_CDS"/>
    <property type="molecule type" value="Genomic_DNA"/>
</dbReference>
<dbReference type="EMBL" id="BC027102">
    <property type="protein sequence ID" value="AAH27102.1"/>
    <property type="molecule type" value="mRNA"/>
</dbReference>
<dbReference type="CCDS" id="CCDS41098.1">
    <molecule id="Q99JA4-1"/>
</dbReference>
<dbReference type="RefSeq" id="NP_001268788.1">
    <molecule id="Q99JA4-1"/>
    <property type="nucleotide sequence ID" value="NM_001281859.1"/>
</dbReference>
<dbReference type="RefSeq" id="NP_001268791.1">
    <molecule id="Q99JA4-2"/>
    <property type="nucleotide sequence ID" value="NM_001281862.1"/>
</dbReference>
<dbReference type="RefSeq" id="NP_067451.2">
    <molecule id="Q99JA4-1"/>
    <property type="nucleotide sequence ID" value="NM_021476.5"/>
</dbReference>
<dbReference type="RefSeq" id="XP_036017948.1">
    <molecule id="Q99JA4-2"/>
    <property type="nucleotide sequence ID" value="XM_036162055.1"/>
</dbReference>
<dbReference type="SMR" id="Q99JA4"/>
<dbReference type="BioGRID" id="208449">
    <property type="interactions" value="1"/>
</dbReference>
<dbReference type="DIP" id="DIP-48916N"/>
<dbReference type="FunCoup" id="Q99JA4">
    <property type="interactions" value="1330"/>
</dbReference>
<dbReference type="IntAct" id="Q99JA4">
    <property type="interactions" value="1"/>
</dbReference>
<dbReference type="STRING" id="10090.ENSMUSP00000109108"/>
<dbReference type="BindingDB" id="Q99JA4"/>
<dbReference type="ChEMBL" id="CHEMBL3808269"/>
<dbReference type="GlyCosmos" id="Q99JA4">
    <property type="glycosylation" value="4 sites, No reported glycans"/>
</dbReference>
<dbReference type="GlyGen" id="Q99JA4">
    <property type="glycosylation" value="4 sites"/>
</dbReference>
<dbReference type="iPTMnet" id="Q99JA4"/>
<dbReference type="PhosphoSitePlus" id="Q99JA4"/>
<dbReference type="jPOST" id="Q99JA4"/>
<dbReference type="PaxDb" id="10090-ENSMUSP00000109108"/>
<dbReference type="Antibodypedia" id="548">
    <property type="antibodies" value="315 antibodies from 31 providers"/>
</dbReference>
<dbReference type="DNASU" id="58861"/>
<dbReference type="Ensembl" id="ENSMUST00000064892.4">
    <molecule id="Q99JA4-1"/>
    <property type="protein sequence ID" value="ENSMUSP00000063520.4"/>
    <property type="gene ID" value="ENSMUSG00000052821.4"/>
</dbReference>
<dbReference type="Ensembl" id="ENSMUST00000113480.2">
    <molecule id="Q99JA4-1"/>
    <property type="protein sequence ID" value="ENSMUSP00000109108.2"/>
    <property type="gene ID" value="ENSMUSG00000052821.4"/>
</dbReference>
<dbReference type="GeneID" id="58861"/>
<dbReference type="KEGG" id="mmu:58861"/>
<dbReference type="UCSC" id="uc009ubt.2">
    <molecule id="Q99JA4-1"/>
    <property type="organism name" value="mouse"/>
</dbReference>
<dbReference type="AGR" id="MGI:1926218"/>
<dbReference type="CTD" id="10800"/>
<dbReference type="MGI" id="MGI:1926218">
    <property type="gene designation" value="Cysltr1"/>
</dbReference>
<dbReference type="VEuPathDB" id="HostDB:ENSMUSG00000052821"/>
<dbReference type="eggNOG" id="ENOG502QUJU">
    <property type="taxonomic scope" value="Eukaryota"/>
</dbReference>
<dbReference type="GeneTree" id="ENSGT01130000278275"/>
<dbReference type="HOGENOM" id="CLU_009579_8_2_1"/>
<dbReference type="InParanoid" id="Q99JA4"/>
<dbReference type="OMA" id="FMPYHVQ"/>
<dbReference type="OrthoDB" id="9990906at2759"/>
<dbReference type="PhylomeDB" id="Q99JA4"/>
<dbReference type="TreeFam" id="TF350009"/>
<dbReference type="Reactome" id="R-MMU-391906">
    <property type="pathway name" value="Leukotriene receptors"/>
</dbReference>
<dbReference type="Reactome" id="R-MMU-416476">
    <property type="pathway name" value="G alpha (q) signalling events"/>
</dbReference>
<dbReference type="BioGRID-ORCS" id="58861">
    <property type="hits" value="2 hits in 76 CRISPR screens"/>
</dbReference>
<dbReference type="PRO" id="PR:Q99JA4"/>
<dbReference type="Proteomes" id="UP000000589">
    <property type="component" value="Chromosome X"/>
</dbReference>
<dbReference type="RNAct" id="Q99JA4">
    <property type="molecule type" value="protein"/>
</dbReference>
<dbReference type="Bgee" id="ENSMUSG00000052821">
    <property type="expression patterns" value="Expressed in epiblast cell in embryo and 96 other cell types or tissues"/>
</dbReference>
<dbReference type="GO" id="GO:0005886">
    <property type="term" value="C:plasma membrane"/>
    <property type="evidence" value="ECO:0000314"/>
    <property type="project" value="MGI"/>
</dbReference>
<dbReference type="GO" id="GO:0004974">
    <property type="term" value="F:leukotriene receptor activity"/>
    <property type="evidence" value="ECO:0000314"/>
    <property type="project" value="MGI"/>
</dbReference>
<dbReference type="GO" id="GO:0006816">
    <property type="term" value="P:calcium ion transport"/>
    <property type="evidence" value="ECO:0000314"/>
    <property type="project" value="MGI"/>
</dbReference>
<dbReference type="GO" id="GO:0007166">
    <property type="term" value="P:cell surface receptor signaling pathway"/>
    <property type="evidence" value="ECO:0000314"/>
    <property type="project" value="MGI"/>
</dbReference>
<dbReference type="GO" id="GO:0071456">
    <property type="term" value="P:cellular response to hypoxia"/>
    <property type="evidence" value="ECO:0007669"/>
    <property type="project" value="Ensembl"/>
</dbReference>
<dbReference type="GO" id="GO:0006935">
    <property type="term" value="P:chemotaxis"/>
    <property type="evidence" value="ECO:0000314"/>
    <property type="project" value="MGI"/>
</dbReference>
<dbReference type="GO" id="GO:0051649">
    <property type="term" value="P:establishment of localization in cell"/>
    <property type="evidence" value="ECO:0000314"/>
    <property type="project" value="MGI"/>
</dbReference>
<dbReference type="GO" id="GO:0002437">
    <property type="term" value="P:inflammatory response to antigenic stimulus"/>
    <property type="evidence" value="ECO:0000315"/>
    <property type="project" value="MGI"/>
</dbReference>
<dbReference type="GO" id="GO:0045766">
    <property type="term" value="P:positive regulation of angiogenesis"/>
    <property type="evidence" value="ECO:0007669"/>
    <property type="project" value="Ensembl"/>
</dbReference>
<dbReference type="GO" id="GO:0060252">
    <property type="term" value="P:positive regulation of glial cell proliferation"/>
    <property type="evidence" value="ECO:0007669"/>
    <property type="project" value="Ensembl"/>
</dbReference>
<dbReference type="GO" id="GO:0045907">
    <property type="term" value="P:positive regulation of vasoconstriction"/>
    <property type="evidence" value="ECO:0007669"/>
    <property type="project" value="Ensembl"/>
</dbReference>
<dbReference type="CDD" id="cd15158">
    <property type="entry name" value="7tmA_CysLTR1"/>
    <property type="match status" value="1"/>
</dbReference>
<dbReference type="FunFam" id="1.20.1070.10:FF:000017">
    <property type="entry name" value="lysophosphatidic acid receptor 4"/>
    <property type="match status" value="1"/>
</dbReference>
<dbReference type="Gene3D" id="1.20.1070.10">
    <property type="entry name" value="Rhodopsin 7-helix transmembrane proteins"/>
    <property type="match status" value="1"/>
</dbReference>
<dbReference type="InterPro" id="IPR013310">
    <property type="entry name" value="CLT1_recept"/>
</dbReference>
<dbReference type="InterPro" id="IPR004071">
    <property type="entry name" value="Cyst_leuk_rcpt"/>
</dbReference>
<dbReference type="InterPro" id="IPR000276">
    <property type="entry name" value="GPCR_Rhodpsn"/>
</dbReference>
<dbReference type="InterPro" id="IPR017452">
    <property type="entry name" value="GPCR_Rhodpsn_7TM"/>
</dbReference>
<dbReference type="PANTHER" id="PTHR24231:SF45">
    <property type="entry name" value="CYSTEINYL LEUKOTRIENE RECEPTOR 1"/>
    <property type="match status" value="1"/>
</dbReference>
<dbReference type="PANTHER" id="PTHR24231">
    <property type="entry name" value="PURINOCEPTOR-RELATED G-PROTEIN COUPLED RECEPTOR"/>
    <property type="match status" value="1"/>
</dbReference>
<dbReference type="Pfam" id="PF00001">
    <property type="entry name" value="7tm_1"/>
    <property type="match status" value="1"/>
</dbReference>
<dbReference type="PRINTS" id="PR01902">
    <property type="entry name" value="CYSLT1RECPTR"/>
</dbReference>
<dbReference type="PRINTS" id="PR01533">
    <property type="entry name" value="CYSLTRECPTR"/>
</dbReference>
<dbReference type="PRINTS" id="PR00237">
    <property type="entry name" value="GPCRRHODOPSN"/>
</dbReference>
<dbReference type="SUPFAM" id="SSF81321">
    <property type="entry name" value="Family A G protein-coupled receptor-like"/>
    <property type="match status" value="1"/>
</dbReference>
<dbReference type="PROSITE" id="PS50262">
    <property type="entry name" value="G_PROTEIN_RECEP_F1_2"/>
    <property type="match status" value="1"/>
</dbReference>
<reference key="1">
    <citation type="journal article" date="2001" name="Proc. Natl. Acad. Sci. U.S.A.">
        <title>Identification in mice of two isoforms of the cysteinyl leukotriene 1 receptor that result from alternative splicing.</title>
        <authorList>
            <person name="Maekawa A."/>
            <person name="Kanaoka Y."/>
            <person name="Lam B.K."/>
            <person name="Austen K.F."/>
        </authorList>
    </citation>
    <scope>NUCLEOTIDE SEQUENCE [GENOMIC DNA] (ISOFORMS 1 AND 2)</scope>
    <source>
        <strain>129/Sv</strain>
    </source>
</reference>
<reference key="2">
    <citation type="journal article" date="2001" name="Biochem. Pharmacol.">
        <title>Molecular cloning and functional characterization of murine cysteinyl-leukotriene 1 (CysLT1) receptors.</title>
        <authorList>
            <person name="Martin V."/>
            <person name="Sawyer N."/>
            <person name="Stocco R."/>
            <person name="Unett D."/>
            <person name="Lerner M.R."/>
            <person name="Abramovitz M."/>
            <person name="Funk C.D."/>
        </authorList>
    </citation>
    <scope>NUCLEOTIDE SEQUENCE [MRNA] (ISOFORM 1)</scope>
    <source>
        <strain>C57BL/6J</strain>
        <tissue>Trachea</tissue>
    </source>
</reference>
<reference key="3">
    <citation type="journal article" date="2001" name="Biochim. Biophys. Acta">
        <title>Identification of a murine cysteinyl leukotriene receptor by expression in Xenopus laevis oocytes.</title>
        <authorList>
            <person name="Mollerup J."/>
            <person name="Jorgensen S.T."/>
            <person name="Hougaard C."/>
            <person name="Hoffmann E.K."/>
        </authorList>
    </citation>
    <scope>NUCLEOTIDE SEQUENCE [MRNA] (ISOFORM 1)</scope>
    <source>
        <tissue>Blood</tissue>
    </source>
</reference>
<reference key="4">
    <citation type="submission" date="2000-05" db="EMBL/GenBank/DDBJ databases">
        <authorList>
            <person name="Ogasawara H."/>
            <person name="Izumi T."/>
            <person name="Shimizu T."/>
        </authorList>
    </citation>
    <scope>NUCLEOTIDE SEQUENCE [MRNA] (ISOFORM 2)</scope>
    <source>
        <tissue>T-cell</tissue>
    </source>
</reference>
<reference key="5">
    <citation type="journal article" date="2005" name="Science">
        <title>The transcriptional landscape of the mammalian genome.</title>
        <authorList>
            <person name="Carninci P."/>
            <person name="Kasukawa T."/>
            <person name="Katayama S."/>
            <person name="Gough J."/>
            <person name="Frith M.C."/>
            <person name="Maeda N."/>
            <person name="Oyama R."/>
            <person name="Ravasi T."/>
            <person name="Lenhard B."/>
            <person name="Wells C."/>
            <person name="Kodzius R."/>
            <person name="Shimokawa K."/>
            <person name="Bajic V.B."/>
            <person name="Brenner S.E."/>
            <person name="Batalov S."/>
            <person name="Forrest A.R."/>
            <person name="Zavolan M."/>
            <person name="Davis M.J."/>
            <person name="Wilming L.G."/>
            <person name="Aidinis V."/>
            <person name="Allen J.E."/>
            <person name="Ambesi-Impiombato A."/>
            <person name="Apweiler R."/>
            <person name="Aturaliya R.N."/>
            <person name="Bailey T.L."/>
            <person name="Bansal M."/>
            <person name="Baxter L."/>
            <person name="Beisel K.W."/>
            <person name="Bersano T."/>
            <person name="Bono H."/>
            <person name="Chalk A.M."/>
            <person name="Chiu K.P."/>
            <person name="Choudhary V."/>
            <person name="Christoffels A."/>
            <person name="Clutterbuck D.R."/>
            <person name="Crowe M.L."/>
            <person name="Dalla E."/>
            <person name="Dalrymple B.P."/>
            <person name="de Bono B."/>
            <person name="Della Gatta G."/>
            <person name="di Bernardo D."/>
            <person name="Down T."/>
            <person name="Engstrom P."/>
            <person name="Fagiolini M."/>
            <person name="Faulkner G."/>
            <person name="Fletcher C.F."/>
            <person name="Fukushima T."/>
            <person name="Furuno M."/>
            <person name="Futaki S."/>
            <person name="Gariboldi M."/>
            <person name="Georgii-Hemming P."/>
            <person name="Gingeras T.R."/>
            <person name="Gojobori T."/>
            <person name="Green R.E."/>
            <person name="Gustincich S."/>
            <person name="Harbers M."/>
            <person name="Hayashi Y."/>
            <person name="Hensch T.K."/>
            <person name="Hirokawa N."/>
            <person name="Hill D."/>
            <person name="Huminiecki L."/>
            <person name="Iacono M."/>
            <person name="Ikeo K."/>
            <person name="Iwama A."/>
            <person name="Ishikawa T."/>
            <person name="Jakt M."/>
            <person name="Kanapin A."/>
            <person name="Katoh M."/>
            <person name="Kawasawa Y."/>
            <person name="Kelso J."/>
            <person name="Kitamura H."/>
            <person name="Kitano H."/>
            <person name="Kollias G."/>
            <person name="Krishnan S.P."/>
            <person name="Kruger A."/>
            <person name="Kummerfeld S.K."/>
            <person name="Kurochkin I.V."/>
            <person name="Lareau L.F."/>
            <person name="Lazarevic D."/>
            <person name="Lipovich L."/>
            <person name="Liu J."/>
            <person name="Liuni S."/>
            <person name="McWilliam S."/>
            <person name="Madan Babu M."/>
            <person name="Madera M."/>
            <person name="Marchionni L."/>
            <person name="Matsuda H."/>
            <person name="Matsuzawa S."/>
            <person name="Miki H."/>
            <person name="Mignone F."/>
            <person name="Miyake S."/>
            <person name="Morris K."/>
            <person name="Mottagui-Tabar S."/>
            <person name="Mulder N."/>
            <person name="Nakano N."/>
            <person name="Nakauchi H."/>
            <person name="Ng P."/>
            <person name="Nilsson R."/>
            <person name="Nishiguchi S."/>
            <person name="Nishikawa S."/>
            <person name="Nori F."/>
            <person name="Ohara O."/>
            <person name="Okazaki Y."/>
            <person name="Orlando V."/>
            <person name="Pang K.C."/>
            <person name="Pavan W.J."/>
            <person name="Pavesi G."/>
            <person name="Pesole G."/>
            <person name="Petrovsky N."/>
            <person name="Piazza S."/>
            <person name="Reed J."/>
            <person name="Reid J.F."/>
            <person name="Ring B.Z."/>
            <person name="Ringwald M."/>
            <person name="Rost B."/>
            <person name="Ruan Y."/>
            <person name="Salzberg S.L."/>
            <person name="Sandelin A."/>
            <person name="Schneider C."/>
            <person name="Schoenbach C."/>
            <person name="Sekiguchi K."/>
            <person name="Semple C.A."/>
            <person name="Seno S."/>
            <person name="Sessa L."/>
            <person name="Sheng Y."/>
            <person name="Shibata Y."/>
            <person name="Shimada H."/>
            <person name="Shimada K."/>
            <person name="Silva D."/>
            <person name="Sinclair B."/>
            <person name="Sperling S."/>
            <person name="Stupka E."/>
            <person name="Sugiura K."/>
            <person name="Sultana R."/>
            <person name="Takenaka Y."/>
            <person name="Taki K."/>
            <person name="Tammoja K."/>
            <person name="Tan S.L."/>
            <person name="Tang S."/>
            <person name="Taylor M.S."/>
            <person name="Tegner J."/>
            <person name="Teichmann S.A."/>
            <person name="Ueda H.R."/>
            <person name="van Nimwegen E."/>
            <person name="Verardo R."/>
            <person name="Wei C.L."/>
            <person name="Yagi K."/>
            <person name="Yamanishi H."/>
            <person name="Zabarovsky E."/>
            <person name="Zhu S."/>
            <person name="Zimmer A."/>
            <person name="Hide W."/>
            <person name="Bult C."/>
            <person name="Grimmond S.M."/>
            <person name="Teasdale R.D."/>
            <person name="Liu E.T."/>
            <person name="Brusic V."/>
            <person name="Quackenbush J."/>
            <person name="Wahlestedt C."/>
            <person name="Mattick J.S."/>
            <person name="Hume D.A."/>
            <person name="Kai C."/>
            <person name="Sasaki D."/>
            <person name="Tomaru Y."/>
            <person name="Fukuda S."/>
            <person name="Kanamori-Katayama M."/>
            <person name="Suzuki M."/>
            <person name="Aoki J."/>
            <person name="Arakawa T."/>
            <person name="Iida J."/>
            <person name="Imamura K."/>
            <person name="Itoh M."/>
            <person name="Kato T."/>
            <person name="Kawaji H."/>
            <person name="Kawagashira N."/>
            <person name="Kawashima T."/>
            <person name="Kojima M."/>
            <person name="Kondo S."/>
            <person name="Konno H."/>
            <person name="Nakano K."/>
            <person name="Ninomiya N."/>
            <person name="Nishio T."/>
            <person name="Okada M."/>
            <person name="Plessy C."/>
            <person name="Shibata K."/>
            <person name="Shiraki T."/>
            <person name="Suzuki S."/>
            <person name="Tagami M."/>
            <person name="Waki K."/>
            <person name="Watahiki A."/>
            <person name="Okamura-Oho Y."/>
            <person name="Suzuki H."/>
            <person name="Kawai J."/>
            <person name="Hayashizaki Y."/>
        </authorList>
    </citation>
    <scope>NUCLEOTIDE SEQUENCE [LARGE SCALE MRNA] (ISOFORM 1)</scope>
    <source>
        <strain>C57BL/6J</strain>
        <tissue>Colon</tissue>
    </source>
</reference>
<reference key="6">
    <citation type="journal article" date="2009" name="PLoS Biol.">
        <title>Lineage-specific biology revealed by a finished genome assembly of the mouse.</title>
        <authorList>
            <person name="Church D.M."/>
            <person name="Goodstadt L."/>
            <person name="Hillier L.W."/>
            <person name="Zody M.C."/>
            <person name="Goldstein S."/>
            <person name="She X."/>
            <person name="Bult C.J."/>
            <person name="Agarwala R."/>
            <person name="Cherry J.L."/>
            <person name="DiCuccio M."/>
            <person name="Hlavina W."/>
            <person name="Kapustin Y."/>
            <person name="Meric P."/>
            <person name="Maglott D."/>
            <person name="Birtle Z."/>
            <person name="Marques A.C."/>
            <person name="Graves T."/>
            <person name="Zhou S."/>
            <person name="Teague B."/>
            <person name="Potamousis K."/>
            <person name="Churas C."/>
            <person name="Place M."/>
            <person name="Herschleb J."/>
            <person name="Runnheim R."/>
            <person name="Forrest D."/>
            <person name="Amos-Landgraf J."/>
            <person name="Schwartz D.C."/>
            <person name="Cheng Z."/>
            <person name="Lindblad-Toh K."/>
            <person name="Eichler E.E."/>
            <person name="Ponting C.P."/>
        </authorList>
    </citation>
    <scope>NUCLEOTIDE SEQUENCE [LARGE SCALE GENOMIC DNA]</scope>
    <source>
        <strain>C57BL/6J</strain>
    </source>
</reference>
<reference key="7">
    <citation type="journal article" date="2004" name="Genome Res.">
        <title>The status, quality, and expansion of the NIH full-length cDNA project: the Mammalian Gene Collection (MGC).</title>
        <authorList>
            <consortium name="The MGC Project Team"/>
        </authorList>
    </citation>
    <scope>NUCLEOTIDE SEQUENCE [LARGE SCALE MRNA] (ISOFORM 1)</scope>
    <source>
        <strain>Czech II</strain>
        <tissue>Mammary gland</tissue>
    </source>
</reference>
<evidence type="ECO:0000255" key="1"/>
<evidence type="ECO:0000255" key="2">
    <source>
        <dbReference type="PROSITE-ProRule" id="PRU00521"/>
    </source>
</evidence>
<evidence type="ECO:0000303" key="3">
    <source ref="4"/>
</evidence>
<evidence type="ECO:0000305" key="4"/>
<accession>Q99JA4</accession>
<accession>Q544P1</accession>
<accession>Q9JJ71</accession>
<accession>Q9JK47</accession>
<protein>
    <recommendedName>
        <fullName>Cysteinyl leukotriene receptor 1</fullName>
        <shortName>CysLTR1</shortName>
    </recommendedName>
    <alternativeName>
        <fullName>Cysteinyl leukotriene D4 receptor</fullName>
        <shortName>LTD4 receptor</shortName>
    </alternativeName>
</protein>